<accession>P0DSL1</accession>
<organism>
    <name type="scientific">Ectatomma tuberculatum</name>
    <name type="common">Selva ant</name>
    <dbReference type="NCBI Taxonomy" id="39300"/>
    <lineage>
        <taxon>Eukaryota</taxon>
        <taxon>Metazoa</taxon>
        <taxon>Ecdysozoa</taxon>
        <taxon>Arthropoda</taxon>
        <taxon>Hexapoda</taxon>
        <taxon>Insecta</taxon>
        <taxon>Pterygota</taxon>
        <taxon>Neoptera</taxon>
        <taxon>Endopterygota</taxon>
        <taxon>Hymenoptera</taxon>
        <taxon>Apocrita</taxon>
        <taxon>Aculeata</taxon>
        <taxon>Formicoidea</taxon>
        <taxon>Formicidae</taxon>
        <taxon>Ectatomminae</taxon>
        <taxon>Ectatommini</taxon>
        <taxon>Ectatomma</taxon>
    </lineage>
</organism>
<name>TX1BA_ECTTU</name>
<keyword id="KW-0903">Direct protein sequencing</keyword>
<keyword id="KW-1015">Disulfide bond</keyword>
<keyword id="KW-0472">Membrane</keyword>
<keyword id="KW-0964">Secreted</keyword>
<keyword id="KW-1052">Target cell membrane</keyword>
<keyword id="KW-1053">Target membrane</keyword>
<keyword id="KW-0800">Toxin</keyword>
<feature type="chain" id="PRO_0000447105" description="U1-ectatotoxin-Et1b subunit A" evidence="5">
    <location>
        <begin position="1"/>
        <end position="39"/>
    </location>
</feature>
<feature type="disulfide bond" evidence="1">
    <location>
        <begin position="14"/>
        <end position="35"/>
    </location>
</feature>
<feature type="disulfide bond" description="Interchain (with C-21 in subunit B)" evidence="1">
    <location>
        <position position="24"/>
    </location>
</feature>
<dbReference type="SMR" id="P0DSL1"/>
<dbReference type="GO" id="GO:0005576">
    <property type="term" value="C:extracellular region"/>
    <property type="evidence" value="ECO:0007669"/>
    <property type="project" value="UniProtKB-SubCell"/>
</dbReference>
<dbReference type="GO" id="GO:0016020">
    <property type="term" value="C:membrane"/>
    <property type="evidence" value="ECO:0007669"/>
    <property type="project" value="UniProtKB-KW"/>
</dbReference>
<dbReference type="GO" id="GO:0044218">
    <property type="term" value="C:other organism cell membrane"/>
    <property type="evidence" value="ECO:0007669"/>
    <property type="project" value="UniProtKB-KW"/>
</dbReference>
<dbReference type="GO" id="GO:0005216">
    <property type="term" value="F:monoatomic ion channel activity"/>
    <property type="evidence" value="ECO:0007669"/>
    <property type="project" value="InterPro"/>
</dbReference>
<dbReference type="GO" id="GO:0090729">
    <property type="term" value="F:toxin activity"/>
    <property type="evidence" value="ECO:0007669"/>
    <property type="project" value="UniProtKB-KW"/>
</dbReference>
<dbReference type="InterPro" id="IPR009458">
    <property type="entry name" value="Ectatomin"/>
</dbReference>
<dbReference type="InterPro" id="IPR036261">
    <property type="entry name" value="Ectatomin_sf"/>
</dbReference>
<dbReference type="Pfam" id="PF06457">
    <property type="entry name" value="Ectatomin"/>
    <property type="match status" value="1"/>
</dbReference>
<dbReference type="SUPFAM" id="SSF47401">
    <property type="entry name" value="Ectatomin subunits"/>
    <property type="match status" value="1"/>
</dbReference>
<reference key="1">
    <citation type="journal article" date="2014" name="Toxicon">
        <title>Diversity of peptide toxins from stinging ant venoms.</title>
        <authorList>
            <person name="Aili S.R."/>
            <person name="Touchard A."/>
            <person name="Escoubas P."/>
            <person name="Padula M.P."/>
            <person name="Orivel J."/>
            <person name="Dejean A."/>
            <person name="Nicholson G.M."/>
        </authorList>
    </citation>
    <scope>REVIEW</scope>
    <scope>PROTEIN SEQUENCE</scope>
</reference>
<reference key="2">
    <citation type="journal article" date="2016" name="Toxins">
        <title>The biochemical toxin arsenal from ant venoms.</title>
        <authorList>
            <person name="Touchard A."/>
            <person name="Aili S.R."/>
            <person name="Fox E.G."/>
            <person name="Escoubas P."/>
            <person name="Orivel J."/>
            <person name="Nicholson G.M."/>
            <person name="Dejean A."/>
        </authorList>
    </citation>
    <scope>REVIEW</scope>
    <scope>NOMENCLATURE</scope>
</reference>
<proteinExistence type="evidence at protein level"/>
<comment type="subunit">
    <text evidence="5">Heterodimer of subunits A and B; disulfide-linked.</text>
</comment>
<comment type="subcellular location">
    <subcellularLocation>
        <location evidence="5">Secreted</location>
    </subcellularLocation>
    <subcellularLocation>
        <location evidence="5">Target cell membrane</location>
    </subcellularLocation>
</comment>
<comment type="tissue specificity">
    <text evidence="5">Expressed by the venom gland.</text>
</comment>
<comment type="similarity">
    <text evidence="4">Belongs to the ectatomin family. Ectatomin-Et subfamily.</text>
</comment>
<protein>
    <recommendedName>
        <fullName evidence="3">U1-ectatotoxin-Et1b subunit A</fullName>
        <shortName evidence="3">U1-ECTX-Et1b subunit A</shortName>
    </recommendedName>
    <alternativeName>
        <fullName evidence="2">Ectatomin-Et2 subunit A</fullName>
    </alternativeName>
</protein>
<evidence type="ECO:0000250" key="1">
    <source>
        <dbReference type="UniProtKB" id="P49343"/>
    </source>
</evidence>
<evidence type="ECO:0000303" key="2">
    <source>
    </source>
</evidence>
<evidence type="ECO:0000303" key="3">
    <source>
    </source>
</evidence>
<evidence type="ECO:0000305" key="4"/>
<evidence type="ECO:0000305" key="5">
    <source>
    </source>
</evidence>
<sequence length="39" mass="4199">GVKEKLLAVLRKACPVIEKLAKKCHGTVATLKKACSLIH</sequence>